<reference key="1">
    <citation type="submission" date="2004-11" db="EMBL/GenBank/DDBJ databases">
        <title>Complete genome sequence of Thermus thermophilus HB8.</title>
        <authorList>
            <person name="Masui R."/>
            <person name="Kurokawa K."/>
            <person name="Nakagawa N."/>
            <person name="Tokunaga F."/>
            <person name="Koyama Y."/>
            <person name="Shibata T."/>
            <person name="Oshima T."/>
            <person name="Yokoyama S."/>
            <person name="Yasunaga T."/>
            <person name="Kuramitsu S."/>
        </authorList>
    </citation>
    <scope>NUCLEOTIDE SEQUENCE [LARGE SCALE GENOMIC DNA]</scope>
    <source>
        <strain>ATCC 27634 / DSM 579 / HB8</strain>
    </source>
</reference>
<protein>
    <recommendedName>
        <fullName evidence="1">Methylenetetrahydrofolate--tRNA-(uracil-5-)-methyltransferase TrmFO</fullName>
        <ecNumber evidence="1">2.1.1.74</ecNumber>
    </recommendedName>
    <alternativeName>
        <fullName evidence="1">Folate-dependent tRNA (uracil-5-)-methyltransferase</fullName>
    </alternativeName>
    <alternativeName>
        <fullName evidence="1">Folate-dependent tRNA(M-5-U54)-methyltransferase</fullName>
    </alternativeName>
</protein>
<comment type="function">
    <text evidence="1">Catalyzes the folate-dependent formation of 5-methyl-uridine at position 54 (M-5-U54) in all tRNAs.</text>
</comment>
<comment type="catalytic activity">
    <reaction evidence="1">
        <text>uridine(54) in tRNA + (6R)-5,10-methylene-5,6,7,8-tetrahydrofolate + NADH + H(+) = 5-methyluridine(54) in tRNA + (6S)-5,6,7,8-tetrahydrofolate + NAD(+)</text>
        <dbReference type="Rhea" id="RHEA:16873"/>
        <dbReference type="Rhea" id="RHEA-COMP:10167"/>
        <dbReference type="Rhea" id="RHEA-COMP:10193"/>
        <dbReference type="ChEBI" id="CHEBI:15378"/>
        <dbReference type="ChEBI" id="CHEBI:15636"/>
        <dbReference type="ChEBI" id="CHEBI:57453"/>
        <dbReference type="ChEBI" id="CHEBI:57540"/>
        <dbReference type="ChEBI" id="CHEBI:57945"/>
        <dbReference type="ChEBI" id="CHEBI:65315"/>
        <dbReference type="ChEBI" id="CHEBI:74447"/>
        <dbReference type="EC" id="2.1.1.74"/>
    </reaction>
</comment>
<comment type="catalytic activity">
    <reaction evidence="1">
        <text>uridine(54) in tRNA + (6R)-5,10-methylene-5,6,7,8-tetrahydrofolate + NADPH + H(+) = 5-methyluridine(54) in tRNA + (6S)-5,6,7,8-tetrahydrofolate + NADP(+)</text>
        <dbReference type="Rhea" id="RHEA:62372"/>
        <dbReference type="Rhea" id="RHEA-COMP:10167"/>
        <dbReference type="Rhea" id="RHEA-COMP:10193"/>
        <dbReference type="ChEBI" id="CHEBI:15378"/>
        <dbReference type="ChEBI" id="CHEBI:15636"/>
        <dbReference type="ChEBI" id="CHEBI:57453"/>
        <dbReference type="ChEBI" id="CHEBI:57783"/>
        <dbReference type="ChEBI" id="CHEBI:58349"/>
        <dbReference type="ChEBI" id="CHEBI:65315"/>
        <dbReference type="ChEBI" id="CHEBI:74447"/>
        <dbReference type="EC" id="2.1.1.74"/>
    </reaction>
</comment>
<comment type="cofactor">
    <cofactor evidence="1">
        <name>FAD</name>
        <dbReference type="ChEBI" id="CHEBI:57692"/>
    </cofactor>
</comment>
<comment type="subcellular location">
    <subcellularLocation>
        <location evidence="1">Cytoplasm</location>
    </subcellularLocation>
</comment>
<comment type="similarity">
    <text evidence="1">Belongs to the MnmG family. TrmFO subfamily.</text>
</comment>
<accession>Q5SID2</accession>
<keyword id="KW-0002">3D-structure</keyword>
<keyword id="KW-0963">Cytoplasm</keyword>
<keyword id="KW-0274">FAD</keyword>
<keyword id="KW-0285">Flavoprotein</keyword>
<keyword id="KW-0489">Methyltransferase</keyword>
<keyword id="KW-0520">NAD</keyword>
<keyword id="KW-0521">NADP</keyword>
<keyword id="KW-1185">Reference proteome</keyword>
<keyword id="KW-0808">Transferase</keyword>
<keyword id="KW-0819">tRNA processing</keyword>
<sequence length="443" mass="48863">MERVNVVGAGLAGSEAAWTLLRLGVPVRLFEMRPKRMTPAHGTDRFAEIVCSNSLGGEGETNAKGLLQAEMRRAGSLVMEAADLARVPAGGALAVDREEFSGYITERLTGHPLLEVVREEVREIPPGITVLATGPLTSEALAEALKRRFGDHFLAYYDAASPIVLYESIDLTKCFRAGRYGQSADYLNCPMTEEEYRRFHQALLEAQRHTPHDWEKLEFFEACVPVEELARRGYQTLLFGPMKPVGLVDPRTGKEPFAVVQLRQEDKAGRMWSLVGFQTGLKWPEQKRLIQMIPGLENAEIVRYGVMHRNTYLNAPRLLGETLEFREAEGLYAAGVLAGVEGYLESAATGFLAGLNAARKALGLPPVAPPEESMLGGLVRYLATANPEGFQPMYANWGLVPPVEGRMGKKEKRQAMYRRGLEAFSAWLSGLNPPLPRPEAALV</sequence>
<gene>
    <name evidence="1" type="primary">trmFO</name>
    <name type="ordered locus">TTHA1442</name>
</gene>
<name>TRMFO_THET8</name>
<organism>
    <name type="scientific">Thermus thermophilus (strain ATCC 27634 / DSM 579 / HB8)</name>
    <dbReference type="NCBI Taxonomy" id="300852"/>
    <lineage>
        <taxon>Bacteria</taxon>
        <taxon>Thermotogati</taxon>
        <taxon>Deinococcota</taxon>
        <taxon>Deinococci</taxon>
        <taxon>Thermales</taxon>
        <taxon>Thermaceae</taxon>
        <taxon>Thermus</taxon>
    </lineage>
</organism>
<proteinExistence type="evidence at protein level"/>
<evidence type="ECO:0000255" key="1">
    <source>
        <dbReference type="HAMAP-Rule" id="MF_01037"/>
    </source>
</evidence>
<evidence type="ECO:0007829" key="2">
    <source>
        <dbReference type="PDB" id="3G5Q"/>
    </source>
</evidence>
<evidence type="ECO:0007829" key="3">
    <source>
        <dbReference type="PDB" id="3G5S"/>
    </source>
</evidence>
<dbReference type="EC" id="2.1.1.74" evidence="1"/>
<dbReference type="EMBL" id="AP008226">
    <property type="protein sequence ID" value="BAD71265.1"/>
    <property type="molecule type" value="Genomic_DNA"/>
</dbReference>
<dbReference type="RefSeq" id="WP_011228685.1">
    <property type="nucleotide sequence ID" value="NC_006461.1"/>
</dbReference>
<dbReference type="RefSeq" id="YP_144708.1">
    <property type="nucleotide sequence ID" value="NC_006461.1"/>
</dbReference>
<dbReference type="PDB" id="3G5Q">
    <property type="method" value="X-ray"/>
    <property type="resolution" value="2.10 A"/>
    <property type="chains" value="A=1-443"/>
</dbReference>
<dbReference type="PDB" id="3G5R">
    <property type="method" value="X-ray"/>
    <property type="resolution" value="1.60 A"/>
    <property type="chains" value="A=1-443"/>
</dbReference>
<dbReference type="PDB" id="3G5S">
    <property type="method" value="X-ray"/>
    <property type="resolution" value="1.05 A"/>
    <property type="chains" value="A=1-443"/>
</dbReference>
<dbReference type="PDBsum" id="3G5Q"/>
<dbReference type="PDBsum" id="3G5R"/>
<dbReference type="PDBsum" id="3G5S"/>
<dbReference type="SMR" id="Q5SID2"/>
<dbReference type="EnsemblBacteria" id="BAD71265">
    <property type="protein sequence ID" value="BAD71265"/>
    <property type="gene ID" value="BAD71265"/>
</dbReference>
<dbReference type="GeneID" id="3169920"/>
<dbReference type="KEGG" id="ttj:TTHA1442"/>
<dbReference type="PATRIC" id="fig|300852.9.peg.1416"/>
<dbReference type="eggNOG" id="COG1206">
    <property type="taxonomic scope" value="Bacteria"/>
</dbReference>
<dbReference type="HOGENOM" id="CLU_033057_1_0_0"/>
<dbReference type="PhylomeDB" id="Q5SID2"/>
<dbReference type="BRENDA" id="2.1.1.74">
    <property type="organism ID" value="2305"/>
</dbReference>
<dbReference type="EvolutionaryTrace" id="Q5SID2"/>
<dbReference type="Proteomes" id="UP000000532">
    <property type="component" value="Chromosome"/>
</dbReference>
<dbReference type="GO" id="GO:0005829">
    <property type="term" value="C:cytosol"/>
    <property type="evidence" value="ECO:0007669"/>
    <property type="project" value="TreeGrafter"/>
</dbReference>
<dbReference type="GO" id="GO:0050660">
    <property type="term" value="F:flavin adenine dinucleotide binding"/>
    <property type="evidence" value="ECO:0007669"/>
    <property type="project" value="UniProtKB-UniRule"/>
</dbReference>
<dbReference type="GO" id="GO:0047151">
    <property type="term" value="F:tRNA (uracil(54)-C5)-methyltransferase activity, 5,10-methylenetetrahydrofolate-dependent"/>
    <property type="evidence" value="ECO:0007669"/>
    <property type="project" value="UniProtKB-UniRule"/>
</dbReference>
<dbReference type="GO" id="GO:0030488">
    <property type="term" value="P:tRNA methylation"/>
    <property type="evidence" value="ECO:0007669"/>
    <property type="project" value="TreeGrafter"/>
</dbReference>
<dbReference type="GO" id="GO:0002098">
    <property type="term" value="P:tRNA wobble uridine modification"/>
    <property type="evidence" value="ECO:0007669"/>
    <property type="project" value="TreeGrafter"/>
</dbReference>
<dbReference type="Gene3D" id="3.50.50.60">
    <property type="entry name" value="FAD/NAD(P)-binding domain"/>
    <property type="match status" value="2"/>
</dbReference>
<dbReference type="HAMAP" id="MF_01037">
    <property type="entry name" value="TrmFO"/>
    <property type="match status" value="1"/>
</dbReference>
<dbReference type="InterPro" id="IPR036188">
    <property type="entry name" value="FAD/NAD-bd_sf"/>
</dbReference>
<dbReference type="InterPro" id="IPR002218">
    <property type="entry name" value="MnmG-rel"/>
</dbReference>
<dbReference type="InterPro" id="IPR020595">
    <property type="entry name" value="MnmG-rel_CS"/>
</dbReference>
<dbReference type="InterPro" id="IPR040131">
    <property type="entry name" value="MnmG_N"/>
</dbReference>
<dbReference type="InterPro" id="IPR004417">
    <property type="entry name" value="TrmFO"/>
</dbReference>
<dbReference type="NCBIfam" id="TIGR00137">
    <property type="entry name" value="gid_trmFO"/>
    <property type="match status" value="1"/>
</dbReference>
<dbReference type="NCBIfam" id="NF003739">
    <property type="entry name" value="PRK05335.1"/>
    <property type="match status" value="1"/>
</dbReference>
<dbReference type="PANTHER" id="PTHR11806">
    <property type="entry name" value="GLUCOSE INHIBITED DIVISION PROTEIN A"/>
    <property type="match status" value="1"/>
</dbReference>
<dbReference type="PANTHER" id="PTHR11806:SF2">
    <property type="entry name" value="METHYLENETETRAHYDROFOLATE--TRNA-(URACIL-5-)-METHYLTRANSFERASE TRMFO"/>
    <property type="match status" value="1"/>
</dbReference>
<dbReference type="Pfam" id="PF01134">
    <property type="entry name" value="GIDA"/>
    <property type="match status" value="1"/>
</dbReference>
<dbReference type="SUPFAM" id="SSF51905">
    <property type="entry name" value="FAD/NAD(P)-binding domain"/>
    <property type="match status" value="1"/>
</dbReference>
<dbReference type="PROSITE" id="PS01281">
    <property type="entry name" value="GIDA_2"/>
    <property type="match status" value="1"/>
</dbReference>
<feature type="chain" id="PRO_0000346420" description="Methylenetetrahydrofolate--tRNA-(uracil-5-)-methyltransferase TrmFO">
    <location>
        <begin position="1"/>
        <end position="443"/>
    </location>
</feature>
<feature type="binding site" evidence="1">
    <location>
        <begin position="8"/>
        <end position="13"/>
    </location>
    <ligand>
        <name>FAD</name>
        <dbReference type="ChEBI" id="CHEBI:57692"/>
    </ligand>
</feature>
<feature type="strand" evidence="3">
    <location>
        <begin position="4"/>
        <end position="7"/>
    </location>
</feature>
<feature type="helix" evidence="3">
    <location>
        <begin position="11"/>
        <end position="22"/>
    </location>
</feature>
<feature type="strand" evidence="3">
    <location>
        <begin position="27"/>
        <end position="30"/>
    </location>
</feature>
<feature type="turn" evidence="3">
    <location>
        <begin position="33"/>
        <end position="35"/>
    </location>
</feature>
<feature type="strand" evidence="3">
    <location>
        <begin position="54"/>
        <end position="57"/>
    </location>
</feature>
<feature type="helix" evidence="3">
    <location>
        <begin position="63"/>
        <end position="74"/>
    </location>
</feature>
<feature type="helix" evidence="3">
    <location>
        <begin position="77"/>
        <end position="84"/>
    </location>
</feature>
<feature type="strand" evidence="3">
    <location>
        <begin position="85"/>
        <end position="87"/>
    </location>
</feature>
<feature type="strand" evidence="3">
    <location>
        <begin position="92"/>
        <end position="95"/>
    </location>
</feature>
<feature type="helix" evidence="3">
    <location>
        <begin position="97"/>
        <end position="109"/>
    </location>
</feature>
<feature type="strand" evidence="3">
    <location>
        <begin position="114"/>
        <end position="117"/>
    </location>
</feature>
<feature type="strand" evidence="3">
    <location>
        <begin position="126"/>
        <end position="131"/>
    </location>
</feature>
<feature type="helix" evidence="3">
    <location>
        <begin position="139"/>
        <end position="149"/>
    </location>
</feature>
<feature type="helix" evidence="3">
    <location>
        <begin position="151"/>
        <end position="153"/>
    </location>
</feature>
<feature type="strand" evidence="3">
    <location>
        <begin position="154"/>
        <end position="160"/>
    </location>
</feature>
<feature type="strand" evidence="3">
    <location>
        <begin position="163"/>
        <end position="165"/>
    </location>
</feature>
<feature type="helix" evidence="3">
    <location>
        <begin position="166"/>
        <end position="168"/>
    </location>
</feature>
<feature type="helix" evidence="3">
    <location>
        <begin position="171"/>
        <end position="173"/>
    </location>
</feature>
<feature type="strand" evidence="3">
    <location>
        <begin position="187"/>
        <end position="191"/>
    </location>
</feature>
<feature type="helix" evidence="3">
    <location>
        <begin position="193"/>
        <end position="205"/>
    </location>
</feature>
<feature type="helix" evidence="3">
    <location>
        <begin position="226"/>
        <end position="231"/>
    </location>
</feature>
<feature type="helix" evidence="3">
    <location>
        <begin position="236"/>
        <end position="239"/>
    </location>
</feature>
<feature type="turn" evidence="3">
    <location>
        <begin position="240"/>
        <end position="242"/>
    </location>
</feature>
<feature type="turn" evidence="3">
    <location>
        <begin position="250"/>
        <end position="252"/>
    </location>
</feature>
<feature type="strand" evidence="3">
    <location>
        <begin position="257"/>
        <end position="264"/>
    </location>
</feature>
<feature type="strand" evidence="3">
    <location>
        <begin position="271"/>
        <end position="274"/>
    </location>
</feature>
<feature type="helix" evidence="3">
    <location>
        <begin position="283"/>
        <end position="290"/>
    </location>
</feature>
<feature type="strand" evidence="3">
    <location>
        <begin position="301"/>
        <end position="303"/>
    </location>
</feature>
<feature type="strand" evidence="3">
    <location>
        <begin position="306"/>
        <end position="313"/>
    </location>
</feature>
<feature type="helix" evidence="3">
    <location>
        <begin position="315"/>
        <end position="318"/>
    </location>
</feature>
<feature type="strand" evidence="3">
    <location>
        <begin position="323"/>
        <end position="325"/>
    </location>
</feature>
<feature type="strand" evidence="3">
    <location>
        <begin position="328"/>
        <end position="333"/>
    </location>
</feature>
<feature type="helix" evidence="3">
    <location>
        <begin position="335"/>
        <end position="338"/>
    </location>
</feature>
<feature type="helix" evidence="3">
    <location>
        <begin position="343"/>
        <end position="361"/>
    </location>
</feature>
<feature type="helix" evidence="3">
    <location>
        <begin position="374"/>
        <end position="384"/>
    </location>
</feature>
<feature type="helix" evidence="3">
    <location>
        <begin position="397"/>
        <end position="399"/>
    </location>
</feature>
<feature type="strand" evidence="2">
    <location>
        <begin position="405"/>
        <end position="407"/>
    </location>
</feature>
<feature type="helix" evidence="3">
    <location>
        <begin position="409"/>
        <end position="429"/>
    </location>
</feature>